<comment type="function">
    <text evidence="2">Hydrolyzes diadenosine 5',5'''-P1,P4-tetraphosphate to yield ADP.</text>
</comment>
<comment type="catalytic activity">
    <reaction evidence="2">
        <text>P(1),P(4)-bis(5'-adenosyl) tetraphosphate + H2O = 2 ADP + 2 H(+)</text>
        <dbReference type="Rhea" id="RHEA:24252"/>
        <dbReference type="ChEBI" id="CHEBI:15377"/>
        <dbReference type="ChEBI" id="CHEBI:15378"/>
        <dbReference type="ChEBI" id="CHEBI:58141"/>
        <dbReference type="ChEBI" id="CHEBI:456216"/>
        <dbReference type="EC" id="3.6.1.41"/>
    </reaction>
</comment>
<comment type="subunit">
    <text evidence="1">Monomer.</text>
</comment>
<comment type="similarity">
    <text evidence="2">Belongs to the Ap4A hydrolase family.</text>
</comment>
<proteinExistence type="inferred from homology"/>
<organism>
    <name type="scientific">Escherichia coli O6:H1 (strain CFT073 / ATCC 700928 / UPEC)</name>
    <dbReference type="NCBI Taxonomy" id="199310"/>
    <lineage>
        <taxon>Bacteria</taxon>
        <taxon>Pseudomonadati</taxon>
        <taxon>Pseudomonadota</taxon>
        <taxon>Gammaproteobacteria</taxon>
        <taxon>Enterobacterales</taxon>
        <taxon>Enterobacteriaceae</taxon>
        <taxon>Escherichia</taxon>
    </lineage>
</organism>
<gene>
    <name evidence="2" type="primary">apaH</name>
    <name type="ordered locus">c0061</name>
</gene>
<accession>Q8FL98</accession>
<keyword id="KW-0378">Hydrolase</keyword>
<keyword id="KW-1185">Reference proteome</keyword>
<evidence type="ECO:0000250" key="1"/>
<evidence type="ECO:0000255" key="2">
    <source>
        <dbReference type="HAMAP-Rule" id="MF_00199"/>
    </source>
</evidence>
<dbReference type="EC" id="3.6.1.41" evidence="2"/>
<dbReference type="EMBL" id="AE014075">
    <property type="protein sequence ID" value="AAN78557.1"/>
    <property type="molecule type" value="Genomic_DNA"/>
</dbReference>
<dbReference type="RefSeq" id="WP_000257182.1">
    <property type="nucleotide sequence ID" value="NZ_CP051263.1"/>
</dbReference>
<dbReference type="SMR" id="Q8FL98"/>
<dbReference type="STRING" id="199310.c0061"/>
<dbReference type="KEGG" id="ecc:c0061"/>
<dbReference type="eggNOG" id="COG0639">
    <property type="taxonomic scope" value="Bacteria"/>
</dbReference>
<dbReference type="HOGENOM" id="CLU_056184_2_0_6"/>
<dbReference type="BioCyc" id="ECOL199310:C0061-MONOMER"/>
<dbReference type="Proteomes" id="UP000001410">
    <property type="component" value="Chromosome"/>
</dbReference>
<dbReference type="GO" id="GO:0008803">
    <property type="term" value="F:bis(5'-nucleosyl)-tetraphosphatase (symmetrical) activity"/>
    <property type="evidence" value="ECO:0007669"/>
    <property type="project" value="UniProtKB-UniRule"/>
</dbReference>
<dbReference type="CDD" id="cd07422">
    <property type="entry name" value="MPP_ApaH"/>
    <property type="match status" value="1"/>
</dbReference>
<dbReference type="FunFam" id="3.60.21.10:FF:000013">
    <property type="entry name" value="Bis(5'-nucleosyl)-tetraphosphatase, symmetrical"/>
    <property type="match status" value="1"/>
</dbReference>
<dbReference type="Gene3D" id="3.60.21.10">
    <property type="match status" value="1"/>
</dbReference>
<dbReference type="HAMAP" id="MF_00199">
    <property type="entry name" value="ApaH"/>
    <property type="match status" value="1"/>
</dbReference>
<dbReference type="InterPro" id="IPR004617">
    <property type="entry name" value="ApaH"/>
</dbReference>
<dbReference type="InterPro" id="IPR004843">
    <property type="entry name" value="Calcineurin-like_PHP_ApaH"/>
</dbReference>
<dbReference type="InterPro" id="IPR029052">
    <property type="entry name" value="Metallo-depent_PP-like"/>
</dbReference>
<dbReference type="NCBIfam" id="TIGR00668">
    <property type="entry name" value="apaH"/>
    <property type="match status" value="1"/>
</dbReference>
<dbReference type="NCBIfam" id="NF001204">
    <property type="entry name" value="PRK00166.1"/>
    <property type="match status" value="1"/>
</dbReference>
<dbReference type="PANTHER" id="PTHR40942">
    <property type="match status" value="1"/>
</dbReference>
<dbReference type="PANTHER" id="PTHR40942:SF4">
    <property type="entry name" value="CYTOCHROME C5"/>
    <property type="match status" value="1"/>
</dbReference>
<dbReference type="Pfam" id="PF00149">
    <property type="entry name" value="Metallophos"/>
    <property type="match status" value="1"/>
</dbReference>
<dbReference type="PIRSF" id="PIRSF000903">
    <property type="entry name" value="B5n-ttraPtase_sm"/>
    <property type="match status" value="1"/>
</dbReference>
<dbReference type="SUPFAM" id="SSF56300">
    <property type="entry name" value="Metallo-dependent phosphatases"/>
    <property type="match status" value="1"/>
</dbReference>
<reference key="1">
    <citation type="journal article" date="2002" name="Proc. Natl. Acad. Sci. U.S.A.">
        <title>Extensive mosaic structure revealed by the complete genome sequence of uropathogenic Escherichia coli.</title>
        <authorList>
            <person name="Welch R.A."/>
            <person name="Burland V."/>
            <person name="Plunkett G. III"/>
            <person name="Redford P."/>
            <person name="Roesch P."/>
            <person name="Rasko D."/>
            <person name="Buckles E.L."/>
            <person name="Liou S.-R."/>
            <person name="Boutin A."/>
            <person name="Hackett J."/>
            <person name="Stroud D."/>
            <person name="Mayhew G.F."/>
            <person name="Rose D.J."/>
            <person name="Zhou S."/>
            <person name="Schwartz D.C."/>
            <person name="Perna N.T."/>
            <person name="Mobley H.L.T."/>
            <person name="Donnenberg M.S."/>
            <person name="Blattner F.R."/>
        </authorList>
    </citation>
    <scope>NUCLEOTIDE SEQUENCE [LARGE SCALE GENOMIC DNA]</scope>
    <source>
        <strain>CFT073 / ATCC 700928 / UPEC</strain>
    </source>
</reference>
<sequence>MATYLIGDVHGCYDELIALLHKVEFTPGKDTLWLTGDLVARGPGSLDVLRYVKSLGDSVRLVLGNHDLHLLAVFAGISRNKPKDRLTPLLEAPDADELLNWLRRQPLLQIDEEKKLVMAHAGITPQWDLQTAKECARDVEAVLSSDSYPFFLDAMYGDMPNNWSPELRGLGRLRFITNAFTRMRFCFPNGQLDMYSKESPEEAPAPLKPWFAIPGPVAEEYNIAFGHWASLEGKGTPEGIYALDTGCCWGGTLTCLRWEDKQYFVQPSNRHKDMGEGEAVAS</sequence>
<name>APAH_ECOL6</name>
<feature type="chain" id="PRO_0000197989" description="Bis(5'-nucleosyl)-tetraphosphatase, symmetrical">
    <location>
        <begin position="1"/>
        <end position="282"/>
    </location>
</feature>
<protein>
    <recommendedName>
        <fullName evidence="2">Bis(5'-nucleosyl)-tetraphosphatase, symmetrical</fullName>
        <ecNumber evidence="2">3.6.1.41</ecNumber>
    </recommendedName>
    <alternativeName>
        <fullName evidence="2">Ap4A hydrolase</fullName>
    </alternativeName>
    <alternativeName>
        <fullName evidence="2">Diadenosine 5',5'''-P1,P4-tetraphosphate pyrophosphohydrolase</fullName>
    </alternativeName>
    <alternativeName>
        <fullName evidence="2">Diadenosine tetraphosphatase</fullName>
    </alternativeName>
</protein>